<feature type="chain" id="PRO_0000083347" description="Protein IWS1 homolog">
    <location>
        <begin position="1"/>
        <end position="766"/>
    </location>
</feature>
<feature type="domain" description="TFIIS N-terminal" evidence="4">
    <location>
        <begin position="561"/>
        <end position="639"/>
    </location>
</feature>
<feature type="region of interest" description="Disordered" evidence="5">
    <location>
        <begin position="1"/>
        <end position="466"/>
    </location>
</feature>
<feature type="region of interest" description="Interaction with SUPT6H and ALYREF" evidence="1">
    <location>
        <begin position="470"/>
        <end position="766"/>
    </location>
</feature>
<feature type="region of interest" description="Disordered" evidence="5">
    <location>
        <begin position="643"/>
        <end position="679"/>
    </location>
</feature>
<feature type="short sequence motif" description="Integrase domain-binding motif (IBM)" evidence="3">
    <location>
        <begin position="416"/>
        <end position="442"/>
    </location>
</feature>
<feature type="compositionally biased region" description="Basic and acidic residues" evidence="5">
    <location>
        <begin position="44"/>
        <end position="67"/>
    </location>
</feature>
<feature type="compositionally biased region" description="Basic and acidic residues" evidence="5">
    <location>
        <begin position="85"/>
        <end position="102"/>
    </location>
</feature>
<feature type="compositionally biased region" description="Basic and acidic residues" evidence="5">
    <location>
        <begin position="131"/>
        <end position="144"/>
    </location>
</feature>
<feature type="compositionally biased region" description="Basic and acidic residues" evidence="5">
    <location>
        <begin position="176"/>
        <end position="197"/>
    </location>
</feature>
<feature type="compositionally biased region" description="Basic and acidic residues" evidence="5">
    <location>
        <begin position="267"/>
        <end position="320"/>
    </location>
</feature>
<feature type="compositionally biased region" description="Acidic residues" evidence="5">
    <location>
        <begin position="321"/>
        <end position="331"/>
    </location>
</feature>
<feature type="compositionally biased region" description="Basic and acidic residues" evidence="5">
    <location>
        <begin position="371"/>
        <end position="380"/>
    </location>
</feature>
<feature type="compositionally biased region" description="Basic and acidic residues" evidence="5">
    <location>
        <begin position="392"/>
        <end position="406"/>
    </location>
</feature>
<feature type="compositionally biased region" description="Acidic residues" evidence="5">
    <location>
        <begin position="427"/>
        <end position="447"/>
    </location>
</feature>
<feature type="compositionally biased region" description="Basic and acidic residues" evidence="5">
    <location>
        <begin position="646"/>
        <end position="657"/>
    </location>
</feature>
<feature type="modified residue" description="N-acetylmethionine" evidence="3">
    <location>
        <position position="1"/>
    </location>
</feature>
<feature type="modified residue" description="Phosphoserine" evidence="2">
    <location>
        <position position="27"/>
    </location>
</feature>
<feature type="modified residue" description="Phosphoserine" evidence="3">
    <location>
        <position position="54"/>
    </location>
</feature>
<feature type="modified residue" description="Phosphoserine" evidence="3">
    <location>
        <position position="69"/>
    </location>
</feature>
<feature type="modified residue" description="Phosphoserine" evidence="3">
    <location>
        <position position="157"/>
    </location>
</feature>
<feature type="modified residue" description="Phosphoserine" evidence="3">
    <location>
        <position position="170"/>
    </location>
</feature>
<feature type="modified residue" description="Phosphoserine" evidence="3">
    <location>
        <position position="172"/>
    </location>
</feature>
<feature type="modified residue" description="Phosphoserine" evidence="2">
    <location>
        <position position="183"/>
    </location>
</feature>
<feature type="modified residue" description="Phosphoserine" evidence="12">
    <location>
        <position position="196"/>
    </location>
</feature>
<feature type="modified residue" description="Phosphoserine" evidence="3">
    <location>
        <position position="198"/>
    </location>
</feature>
<feature type="modified residue" description="Phosphoserine" evidence="9 12">
    <location>
        <position position="209"/>
    </location>
</feature>
<feature type="modified residue" description="Phosphoserine" evidence="12">
    <location>
        <position position="211"/>
    </location>
</feature>
<feature type="modified residue" description="Phosphoserine" evidence="12">
    <location>
        <position position="222"/>
    </location>
</feature>
<feature type="modified residue" description="Phosphoserine" evidence="3">
    <location>
        <position position="224"/>
    </location>
</feature>
<feature type="modified residue" description="Phosphoserine" evidence="9 12">
    <location>
        <position position="235"/>
    </location>
</feature>
<feature type="modified residue" description="Phosphoserine" evidence="12">
    <location>
        <position position="237"/>
    </location>
</feature>
<feature type="modified residue" description="Phosphoserine" evidence="3">
    <location>
        <position position="248"/>
    </location>
</feature>
<feature type="modified residue" description="Phosphoserine" evidence="3">
    <location>
        <position position="250"/>
    </location>
</feature>
<feature type="modified residue" description="Phosphoserine" evidence="3">
    <location>
        <position position="252"/>
    </location>
</feature>
<feature type="modified residue" description="Phosphoserine" evidence="12">
    <location>
        <position position="261"/>
    </location>
</feature>
<feature type="modified residue" description="Phosphoserine" evidence="12">
    <location>
        <position position="263"/>
    </location>
</feature>
<feature type="modified residue" description="Phosphoserine" evidence="3">
    <location>
        <position position="277"/>
    </location>
</feature>
<feature type="modified residue" description="Phosphoserine" evidence="3">
    <location>
        <position position="280"/>
    </location>
</feature>
<feature type="modified residue" description="Phosphoserine" evidence="2">
    <location>
        <position position="295"/>
    </location>
</feature>
<feature type="modified residue" description="Phosphoserine" evidence="12">
    <location>
        <position position="306"/>
    </location>
</feature>
<feature type="modified residue" description="Phosphoserine" evidence="12">
    <location>
        <position position="307"/>
    </location>
</feature>
<feature type="modified residue" description="Phosphoserine" evidence="12">
    <location>
        <position position="309"/>
    </location>
</feature>
<feature type="modified residue" description="Phosphoserine" evidence="10 12">
    <location>
        <position position="321"/>
    </location>
</feature>
<feature type="modified residue" description="Phosphoserine" evidence="9 11 12">
    <location>
        <position position="343"/>
    </location>
</feature>
<feature type="modified residue" description="Phosphoserine" evidence="9 11 12">
    <location>
        <position position="345"/>
    </location>
</feature>
<feature type="modified residue" description="Phosphoserine" evidence="9 12">
    <location>
        <position position="366"/>
    </location>
</feature>
<feature type="modified residue" description="Phosphoserine" evidence="9 12">
    <location>
        <position position="368"/>
    </location>
</feature>
<feature type="modified residue" description="Phosphoserine" evidence="9 12">
    <location>
        <position position="372"/>
    </location>
</feature>
<feature type="modified residue" description="Phosphothreonine" evidence="3">
    <location>
        <position position="381"/>
    </location>
</feature>
<feature type="modified residue" description="Phosphoserine" evidence="10 12">
    <location>
        <position position="384"/>
    </location>
</feature>
<feature type="modified residue" description="Phosphoserine" evidence="10 12">
    <location>
        <position position="386"/>
    </location>
</feature>
<feature type="modified residue" description="Phosphoserine" evidence="3">
    <location>
        <position position="408"/>
    </location>
</feature>
<feature type="modified residue" description="Phosphoserine" evidence="3">
    <location>
        <position position="410"/>
    </location>
</feature>
<feature type="modified residue" description="Phosphoserine" evidence="3">
    <location>
        <position position="412"/>
    </location>
</feature>
<feature type="modified residue" description="Phosphoserine" evidence="3">
    <location>
        <position position="427"/>
    </location>
</feature>
<feature type="modified residue" description="Phosphothreonine" evidence="3">
    <location>
        <position position="436"/>
    </location>
</feature>
<feature type="modified residue" description="Phosphoserine" evidence="3">
    <location>
        <position position="458"/>
    </location>
</feature>
<feature type="modified residue" description="Phosphoserine" evidence="3">
    <location>
        <position position="460"/>
    </location>
</feature>
<feature type="modified residue" description="Phosphothreonine" evidence="3">
    <location>
        <position position="672"/>
    </location>
</feature>
<feature type="splice variant" id="VSP_016994" description="In isoform 2." evidence="7">
    <original>EDRQLNNQKKPALKKLTLLPTVVM</original>
    <variation>VSSSRLPFSPPALNQIDGVANLSL</variation>
    <location>
        <begin position="520"/>
        <end position="543"/>
    </location>
</feature>
<feature type="splice variant" id="VSP_016995" description="In isoform 2." evidence="7">
    <location>
        <begin position="544"/>
        <end position="766"/>
    </location>
</feature>
<feature type="sequence conflict" description="In Ref. 1; BAC31034." evidence="8" ref="1">
    <original>AS</original>
    <variation>VI</variation>
    <location>
        <begin position="260"/>
        <end position="261"/>
    </location>
</feature>
<feature type="sequence conflict" description="In Ref. 1; BAC31034." evidence="8" ref="1">
    <original>S</original>
    <variation>F</variation>
    <location>
        <position position="289"/>
    </location>
</feature>
<feature type="sequence conflict" description="In Ref. 1; BAB24793." evidence="8" ref="1">
    <original>L</original>
    <variation>T</variation>
    <location>
        <position position="480"/>
    </location>
</feature>
<feature type="sequence conflict" description="In Ref. 1; BAB24793." evidence="8" ref="1">
    <original>L</original>
    <variation>M</variation>
    <location>
        <position position="578"/>
    </location>
</feature>
<feature type="sequence conflict" description="In Ref. 1; BAE23006." evidence="8" ref="1">
    <original>R</original>
    <variation>S</variation>
    <location>
        <position position="700"/>
    </location>
</feature>
<accession>Q8C1D8</accession>
<accession>Q3TQ25</accession>
<accession>Q3UWB0</accession>
<accession>Q6NVD1</accession>
<accession>Q8BY73</accession>
<accession>Q9D9H4</accession>
<proteinExistence type="evidence at protein level"/>
<keyword id="KW-0007">Acetylation</keyword>
<keyword id="KW-0025">Alternative splicing</keyword>
<keyword id="KW-0507">mRNA processing</keyword>
<keyword id="KW-0508">mRNA splicing</keyword>
<keyword id="KW-0509">mRNA transport</keyword>
<keyword id="KW-0539">Nucleus</keyword>
<keyword id="KW-0597">Phosphoprotein</keyword>
<keyword id="KW-1185">Reference proteome</keyword>
<keyword id="KW-0804">Transcription</keyword>
<keyword id="KW-0805">Transcription regulation</keyword>
<keyword id="KW-0813">Transport</keyword>
<evidence type="ECO:0000250" key="1"/>
<evidence type="ECO:0000250" key="2">
    <source>
        <dbReference type="UniProtKB" id="Q3SWT4"/>
    </source>
</evidence>
<evidence type="ECO:0000250" key="3">
    <source>
        <dbReference type="UniProtKB" id="Q96ST2"/>
    </source>
</evidence>
<evidence type="ECO:0000255" key="4">
    <source>
        <dbReference type="PROSITE-ProRule" id="PRU00649"/>
    </source>
</evidence>
<evidence type="ECO:0000256" key="5">
    <source>
        <dbReference type="SAM" id="MobiDB-lite"/>
    </source>
</evidence>
<evidence type="ECO:0000269" key="6">
    <source>
    </source>
</evidence>
<evidence type="ECO:0000303" key="7">
    <source>
    </source>
</evidence>
<evidence type="ECO:0000305" key="8"/>
<evidence type="ECO:0007744" key="9">
    <source>
    </source>
</evidence>
<evidence type="ECO:0007744" key="10">
    <source>
    </source>
</evidence>
<evidence type="ECO:0007744" key="11">
    <source>
    </source>
</evidence>
<evidence type="ECO:0007744" key="12">
    <source>
    </source>
</evidence>
<name>IWS1_MOUSE</name>
<organism>
    <name type="scientific">Mus musculus</name>
    <name type="common">Mouse</name>
    <dbReference type="NCBI Taxonomy" id="10090"/>
    <lineage>
        <taxon>Eukaryota</taxon>
        <taxon>Metazoa</taxon>
        <taxon>Chordata</taxon>
        <taxon>Craniata</taxon>
        <taxon>Vertebrata</taxon>
        <taxon>Euteleostomi</taxon>
        <taxon>Mammalia</taxon>
        <taxon>Eutheria</taxon>
        <taxon>Euarchontoglires</taxon>
        <taxon>Glires</taxon>
        <taxon>Rodentia</taxon>
        <taxon>Myomorpha</taxon>
        <taxon>Muroidea</taxon>
        <taxon>Muridae</taxon>
        <taxon>Murinae</taxon>
        <taxon>Mus</taxon>
        <taxon>Mus</taxon>
    </lineage>
</organism>
<reference key="1">
    <citation type="journal article" date="2005" name="Science">
        <title>The transcriptional landscape of the mammalian genome.</title>
        <authorList>
            <person name="Carninci P."/>
            <person name="Kasukawa T."/>
            <person name="Katayama S."/>
            <person name="Gough J."/>
            <person name="Frith M.C."/>
            <person name="Maeda N."/>
            <person name="Oyama R."/>
            <person name="Ravasi T."/>
            <person name="Lenhard B."/>
            <person name="Wells C."/>
            <person name="Kodzius R."/>
            <person name="Shimokawa K."/>
            <person name="Bajic V.B."/>
            <person name="Brenner S.E."/>
            <person name="Batalov S."/>
            <person name="Forrest A.R."/>
            <person name="Zavolan M."/>
            <person name="Davis M.J."/>
            <person name="Wilming L.G."/>
            <person name="Aidinis V."/>
            <person name="Allen J.E."/>
            <person name="Ambesi-Impiombato A."/>
            <person name="Apweiler R."/>
            <person name="Aturaliya R.N."/>
            <person name="Bailey T.L."/>
            <person name="Bansal M."/>
            <person name="Baxter L."/>
            <person name="Beisel K.W."/>
            <person name="Bersano T."/>
            <person name="Bono H."/>
            <person name="Chalk A.M."/>
            <person name="Chiu K.P."/>
            <person name="Choudhary V."/>
            <person name="Christoffels A."/>
            <person name="Clutterbuck D.R."/>
            <person name="Crowe M.L."/>
            <person name="Dalla E."/>
            <person name="Dalrymple B.P."/>
            <person name="de Bono B."/>
            <person name="Della Gatta G."/>
            <person name="di Bernardo D."/>
            <person name="Down T."/>
            <person name="Engstrom P."/>
            <person name="Fagiolini M."/>
            <person name="Faulkner G."/>
            <person name="Fletcher C.F."/>
            <person name="Fukushima T."/>
            <person name="Furuno M."/>
            <person name="Futaki S."/>
            <person name="Gariboldi M."/>
            <person name="Georgii-Hemming P."/>
            <person name="Gingeras T.R."/>
            <person name="Gojobori T."/>
            <person name="Green R.E."/>
            <person name="Gustincich S."/>
            <person name="Harbers M."/>
            <person name="Hayashi Y."/>
            <person name="Hensch T.K."/>
            <person name="Hirokawa N."/>
            <person name="Hill D."/>
            <person name="Huminiecki L."/>
            <person name="Iacono M."/>
            <person name="Ikeo K."/>
            <person name="Iwama A."/>
            <person name="Ishikawa T."/>
            <person name="Jakt M."/>
            <person name="Kanapin A."/>
            <person name="Katoh M."/>
            <person name="Kawasawa Y."/>
            <person name="Kelso J."/>
            <person name="Kitamura H."/>
            <person name="Kitano H."/>
            <person name="Kollias G."/>
            <person name="Krishnan S.P."/>
            <person name="Kruger A."/>
            <person name="Kummerfeld S.K."/>
            <person name="Kurochkin I.V."/>
            <person name="Lareau L.F."/>
            <person name="Lazarevic D."/>
            <person name="Lipovich L."/>
            <person name="Liu J."/>
            <person name="Liuni S."/>
            <person name="McWilliam S."/>
            <person name="Madan Babu M."/>
            <person name="Madera M."/>
            <person name="Marchionni L."/>
            <person name="Matsuda H."/>
            <person name="Matsuzawa S."/>
            <person name="Miki H."/>
            <person name="Mignone F."/>
            <person name="Miyake S."/>
            <person name="Morris K."/>
            <person name="Mottagui-Tabar S."/>
            <person name="Mulder N."/>
            <person name="Nakano N."/>
            <person name="Nakauchi H."/>
            <person name="Ng P."/>
            <person name="Nilsson R."/>
            <person name="Nishiguchi S."/>
            <person name="Nishikawa S."/>
            <person name="Nori F."/>
            <person name="Ohara O."/>
            <person name="Okazaki Y."/>
            <person name="Orlando V."/>
            <person name="Pang K.C."/>
            <person name="Pavan W.J."/>
            <person name="Pavesi G."/>
            <person name="Pesole G."/>
            <person name="Petrovsky N."/>
            <person name="Piazza S."/>
            <person name="Reed J."/>
            <person name="Reid J.F."/>
            <person name="Ring B.Z."/>
            <person name="Ringwald M."/>
            <person name="Rost B."/>
            <person name="Ruan Y."/>
            <person name="Salzberg S.L."/>
            <person name="Sandelin A."/>
            <person name="Schneider C."/>
            <person name="Schoenbach C."/>
            <person name="Sekiguchi K."/>
            <person name="Semple C.A."/>
            <person name="Seno S."/>
            <person name="Sessa L."/>
            <person name="Sheng Y."/>
            <person name="Shibata Y."/>
            <person name="Shimada H."/>
            <person name="Shimada K."/>
            <person name="Silva D."/>
            <person name="Sinclair B."/>
            <person name="Sperling S."/>
            <person name="Stupka E."/>
            <person name="Sugiura K."/>
            <person name="Sultana R."/>
            <person name="Takenaka Y."/>
            <person name="Taki K."/>
            <person name="Tammoja K."/>
            <person name="Tan S.L."/>
            <person name="Tang S."/>
            <person name="Taylor M.S."/>
            <person name="Tegner J."/>
            <person name="Teichmann S.A."/>
            <person name="Ueda H.R."/>
            <person name="van Nimwegen E."/>
            <person name="Verardo R."/>
            <person name="Wei C.L."/>
            <person name="Yagi K."/>
            <person name="Yamanishi H."/>
            <person name="Zabarovsky E."/>
            <person name="Zhu S."/>
            <person name="Zimmer A."/>
            <person name="Hide W."/>
            <person name="Bult C."/>
            <person name="Grimmond S.M."/>
            <person name="Teasdale R.D."/>
            <person name="Liu E.T."/>
            <person name="Brusic V."/>
            <person name="Quackenbush J."/>
            <person name="Wahlestedt C."/>
            <person name="Mattick J.S."/>
            <person name="Hume D.A."/>
            <person name="Kai C."/>
            <person name="Sasaki D."/>
            <person name="Tomaru Y."/>
            <person name="Fukuda S."/>
            <person name="Kanamori-Katayama M."/>
            <person name="Suzuki M."/>
            <person name="Aoki J."/>
            <person name="Arakawa T."/>
            <person name="Iida J."/>
            <person name="Imamura K."/>
            <person name="Itoh M."/>
            <person name="Kato T."/>
            <person name="Kawaji H."/>
            <person name="Kawagashira N."/>
            <person name="Kawashima T."/>
            <person name="Kojima M."/>
            <person name="Kondo S."/>
            <person name="Konno H."/>
            <person name="Nakano K."/>
            <person name="Ninomiya N."/>
            <person name="Nishio T."/>
            <person name="Okada M."/>
            <person name="Plessy C."/>
            <person name="Shibata K."/>
            <person name="Shiraki T."/>
            <person name="Suzuki S."/>
            <person name="Tagami M."/>
            <person name="Waki K."/>
            <person name="Watahiki A."/>
            <person name="Okamura-Oho Y."/>
            <person name="Suzuki H."/>
            <person name="Kawai J."/>
            <person name="Hayashizaki Y."/>
        </authorList>
    </citation>
    <scope>NUCLEOTIDE SEQUENCE [LARGE SCALE MRNA]</scope>
    <source>
        <strain>C57BL/6J</strain>
        <tissue>Colon</tissue>
        <tissue>Head</tissue>
        <tissue>Testis</tissue>
        <tissue>Thymus</tissue>
    </source>
</reference>
<reference key="2">
    <citation type="journal article" date="2004" name="Genome Res.">
        <title>The status, quality, and expansion of the NIH full-length cDNA project: the Mammalian Gene Collection (MGC).</title>
        <authorList>
            <consortium name="The MGC Project Team"/>
        </authorList>
    </citation>
    <scope>NUCLEOTIDE SEQUENCE [LARGE SCALE MRNA] (ISOFORM 2)</scope>
    <source>
        <strain>C57BL/6J</strain>
        <tissue>Head</tissue>
    </source>
</reference>
<reference key="3">
    <citation type="journal article" date="2007" name="Biochem. Biophys. Res. Commun.">
        <title>A putative transcriptional elongation factor hIws1 is essential for mammalian cell proliferation.</title>
        <authorList>
            <person name="Liu Z."/>
            <person name="Zhou Z."/>
            <person name="Chen G."/>
            <person name="Bao S."/>
        </authorList>
    </citation>
    <scope>TISSUE SPECIFICITY</scope>
</reference>
<reference key="4">
    <citation type="journal article" date="2007" name="Proc. Natl. Acad. Sci. U.S.A.">
        <title>Large-scale phosphorylation analysis of mouse liver.</title>
        <authorList>
            <person name="Villen J."/>
            <person name="Beausoleil S.A."/>
            <person name="Gerber S.A."/>
            <person name="Gygi S.P."/>
        </authorList>
    </citation>
    <scope>PHOSPHORYLATION [LARGE SCALE ANALYSIS] AT SER-209; SER-235; SER-343; SER-345; SER-366; SER-368 AND SER-372</scope>
    <scope>IDENTIFICATION BY MASS SPECTROMETRY [LARGE SCALE ANALYSIS]</scope>
    <source>
        <tissue>Liver</tissue>
    </source>
</reference>
<reference key="5">
    <citation type="journal article" date="2009" name="Immunity">
        <title>The phagosomal proteome in interferon-gamma-activated macrophages.</title>
        <authorList>
            <person name="Trost M."/>
            <person name="English L."/>
            <person name="Lemieux S."/>
            <person name="Courcelles M."/>
            <person name="Desjardins M."/>
            <person name="Thibault P."/>
        </authorList>
    </citation>
    <scope>PHOSPHORYLATION [LARGE SCALE ANALYSIS] AT SER-343 AND SER-345</scope>
    <scope>IDENTIFICATION BY MASS SPECTROMETRY [LARGE SCALE ANALYSIS]</scope>
</reference>
<reference key="6">
    <citation type="journal article" date="2009" name="Mol. Cell. Proteomics">
        <title>Large scale localization of protein phosphorylation by use of electron capture dissociation mass spectrometry.</title>
        <authorList>
            <person name="Sweet S.M."/>
            <person name="Bailey C.M."/>
            <person name="Cunningham D.L."/>
            <person name="Heath J.K."/>
            <person name="Cooper H.J."/>
        </authorList>
    </citation>
    <scope>PHOSPHORYLATION [LARGE SCALE ANALYSIS] AT SER-321; SER-384 AND SER-386</scope>
    <scope>IDENTIFICATION BY MASS SPECTROMETRY [LARGE SCALE ANALYSIS]</scope>
    <source>
        <tissue>Embryonic fibroblast</tissue>
    </source>
</reference>
<reference key="7">
    <citation type="journal article" date="2010" name="Cell">
        <title>A tissue-specific atlas of mouse protein phosphorylation and expression.</title>
        <authorList>
            <person name="Huttlin E.L."/>
            <person name="Jedrychowski M.P."/>
            <person name="Elias J.E."/>
            <person name="Goswami T."/>
            <person name="Rad R."/>
            <person name="Beausoleil S.A."/>
            <person name="Villen J."/>
            <person name="Haas W."/>
            <person name="Sowa M.E."/>
            <person name="Gygi S.P."/>
        </authorList>
    </citation>
    <scope>PHOSPHORYLATION [LARGE SCALE ANALYSIS] AT SER-196; SER-209; SER-211; SER-222; SER-235; SER-237; SER-261; SER-263; SER-306; SER-307; SER-309; SER-321; SER-343; SER-345; SER-366; SER-368; SER-372; SER-384 AND SER-386</scope>
    <scope>IDENTIFICATION BY MASS SPECTROMETRY [LARGE SCALE ANALYSIS]</scope>
    <source>
        <tissue>Brain</tissue>
        <tissue>Brown adipose tissue</tissue>
        <tissue>Heart</tissue>
        <tissue>Kidney</tissue>
        <tissue>Liver</tissue>
        <tissue>Lung</tissue>
        <tissue>Spleen</tissue>
        <tissue>Testis</tissue>
    </source>
</reference>
<protein>
    <recommendedName>
        <fullName>Protein IWS1 homolog</fullName>
    </recommendedName>
    <alternativeName>
        <fullName>IWS1-like protein</fullName>
    </alternativeName>
</protein>
<dbReference type="EMBL" id="AK006925">
    <property type="protein sequence ID" value="BAB24793.1"/>
    <property type="status" value="ALT_INIT"/>
    <property type="molecule type" value="mRNA"/>
</dbReference>
<dbReference type="EMBL" id="AK028247">
    <property type="protein sequence ID" value="BAC25838.1"/>
    <property type="molecule type" value="mRNA"/>
</dbReference>
<dbReference type="EMBL" id="AK041691">
    <property type="protein sequence ID" value="BAC31034.1"/>
    <property type="molecule type" value="mRNA"/>
</dbReference>
<dbReference type="EMBL" id="AK136492">
    <property type="protein sequence ID" value="BAE23006.1"/>
    <property type="status" value="ALT_INIT"/>
    <property type="molecule type" value="mRNA"/>
</dbReference>
<dbReference type="EMBL" id="AK163972">
    <property type="protein sequence ID" value="BAE37560.1"/>
    <property type="molecule type" value="mRNA"/>
</dbReference>
<dbReference type="EMBL" id="BC068184">
    <property type="protein sequence ID" value="AAH68184.1"/>
    <property type="molecule type" value="mRNA"/>
</dbReference>
<dbReference type="CCDS" id="CCDS29115.1">
    <molecule id="Q8C1D8-1"/>
</dbReference>
<dbReference type="RefSeq" id="NP_775617.1">
    <molecule id="Q8C1D8-1"/>
    <property type="nucleotide sequence ID" value="NM_173441.4"/>
</dbReference>
<dbReference type="SMR" id="Q8C1D8"/>
<dbReference type="BioGRID" id="216045">
    <property type="interactions" value="3"/>
</dbReference>
<dbReference type="FunCoup" id="Q8C1D8">
    <property type="interactions" value="3621"/>
</dbReference>
<dbReference type="IntAct" id="Q8C1D8">
    <property type="interactions" value="3"/>
</dbReference>
<dbReference type="MINT" id="Q8C1D8"/>
<dbReference type="STRING" id="10090.ENSMUSP00000025243"/>
<dbReference type="GlyGen" id="Q8C1D8">
    <property type="glycosylation" value="1 site, 1 N-linked glycan (1 site)"/>
</dbReference>
<dbReference type="iPTMnet" id="Q8C1D8"/>
<dbReference type="PhosphoSitePlus" id="Q8C1D8"/>
<dbReference type="SwissPalm" id="Q8C1D8"/>
<dbReference type="jPOST" id="Q8C1D8"/>
<dbReference type="PaxDb" id="10090-ENSMUSP00000025243"/>
<dbReference type="PeptideAtlas" id="Q8C1D8"/>
<dbReference type="ProteomicsDB" id="269021">
    <molecule id="Q8C1D8-1"/>
</dbReference>
<dbReference type="ProteomicsDB" id="269022">
    <molecule id="Q8C1D8-2"/>
</dbReference>
<dbReference type="Pumba" id="Q8C1D8"/>
<dbReference type="Antibodypedia" id="47563">
    <property type="antibodies" value="107 antibodies from 22 providers"/>
</dbReference>
<dbReference type="DNASU" id="73473"/>
<dbReference type="Ensembl" id="ENSMUST00000025243.5">
    <molecule id="Q8C1D8-1"/>
    <property type="protein sequence ID" value="ENSMUSP00000025243.4"/>
    <property type="gene ID" value="ENSMUSG00000024384.5"/>
</dbReference>
<dbReference type="GeneID" id="73473"/>
<dbReference type="KEGG" id="mmu:73473"/>
<dbReference type="UCSC" id="uc008eiy.2">
    <molecule id="Q8C1D8-1"/>
    <property type="organism name" value="mouse"/>
</dbReference>
<dbReference type="AGR" id="MGI:1920723"/>
<dbReference type="CTD" id="55677"/>
<dbReference type="MGI" id="MGI:1920723">
    <property type="gene designation" value="Iws1"/>
</dbReference>
<dbReference type="VEuPathDB" id="HostDB:ENSMUSG00000024384"/>
<dbReference type="eggNOG" id="KOG1793">
    <property type="taxonomic scope" value="Eukaryota"/>
</dbReference>
<dbReference type="GeneTree" id="ENSGT00720000108834"/>
<dbReference type="HOGENOM" id="CLU_018182_0_0_1"/>
<dbReference type="InParanoid" id="Q8C1D8"/>
<dbReference type="OMA" id="HTHKDET"/>
<dbReference type="OrthoDB" id="21124at2759"/>
<dbReference type="PhylomeDB" id="Q8C1D8"/>
<dbReference type="TreeFam" id="TF315504"/>
<dbReference type="Reactome" id="R-MMU-112382">
    <property type="pathway name" value="Formation of RNA Pol II elongation complex"/>
</dbReference>
<dbReference type="Reactome" id="R-MMU-674695">
    <property type="pathway name" value="RNA Polymerase II Pre-transcription Events"/>
</dbReference>
<dbReference type="Reactome" id="R-MMU-75955">
    <property type="pathway name" value="RNA Polymerase II Transcription Elongation"/>
</dbReference>
<dbReference type="BioGRID-ORCS" id="73473">
    <property type="hits" value="11 hits in 77 CRISPR screens"/>
</dbReference>
<dbReference type="ChiTaRS" id="Iws1">
    <property type="organism name" value="mouse"/>
</dbReference>
<dbReference type="PRO" id="PR:Q8C1D8"/>
<dbReference type="Proteomes" id="UP000000589">
    <property type="component" value="Chromosome 18"/>
</dbReference>
<dbReference type="RNAct" id="Q8C1D8">
    <property type="molecule type" value="protein"/>
</dbReference>
<dbReference type="Bgee" id="ENSMUSG00000024384">
    <property type="expression patterns" value="Expressed in embryonic post-anal tail and 229 other cell types or tissues"/>
</dbReference>
<dbReference type="ExpressionAtlas" id="Q8C1D8">
    <property type="expression patterns" value="baseline and differential"/>
</dbReference>
<dbReference type="GO" id="GO:0005654">
    <property type="term" value="C:nucleoplasm"/>
    <property type="evidence" value="ECO:0007669"/>
    <property type="project" value="Ensembl"/>
</dbReference>
<dbReference type="GO" id="GO:0005634">
    <property type="term" value="C:nucleus"/>
    <property type="evidence" value="ECO:0000314"/>
    <property type="project" value="MGI"/>
</dbReference>
<dbReference type="GO" id="GO:0006338">
    <property type="term" value="P:chromatin remodeling"/>
    <property type="evidence" value="ECO:0000250"/>
    <property type="project" value="UniProtKB"/>
</dbReference>
<dbReference type="GO" id="GO:0001701">
    <property type="term" value="P:in utero embryonic development"/>
    <property type="evidence" value="ECO:0000315"/>
    <property type="project" value="MGI"/>
</dbReference>
<dbReference type="GO" id="GO:0006397">
    <property type="term" value="P:mRNA processing"/>
    <property type="evidence" value="ECO:0007669"/>
    <property type="project" value="UniProtKB-KW"/>
</dbReference>
<dbReference type="GO" id="GO:0051028">
    <property type="term" value="P:mRNA transport"/>
    <property type="evidence" value="ECO:0007669"/>
    <property type="project" value="UniProtKB-KW"/>
</dbReference>
<dbReference type="GO" id="GO:0010793">
    <property type="term" value="P:regulation of mRNA export from nucleus"/>
    <property type="evidence" value="ECO:0000250"/>
    <property type="project" value="UniProtKB"/>
</dbReference>
<dbReference type="GO" id="GO:0050684">
    <property type="term" value="P:regulation of mRNA processing"/>
    <property type="evidence" value="ECO:0000250"/>
    <property type="project" value="UniProtKB"/>
</dbReference>
<dbReference type="GO" id="GO:0008380">
    <property type="term" value="P:RNA splicing"/>
    <property type="evidence" value="ECO:0007669"/>
    <property type="project" value="UniProtKB-KW"/>
</dbReference>
<dbReference type="GO" id="GO:0140673">
    <property type="term" value="P:transcription elongation-coupled chromatin remodeling"/>
    <property type="evidence" value="ECO:0007669"/>
    <property type="project" value="Ensembl"/>
</dbReference>
<dbReference type="FunFam" id="1.20.930.10:FF:000001">
    <property type="entry name" value="IWS1, SUPT6H interacting protein"/>
    <property type="match status" value="1"/>
</dbReference>
<dbReference type="Gene3D" id="1.20.930.10">
    <property type="entry name" value="Conserved domain common to transcription factors TFIIS, elongin A, CRSP70"/>
    <property type="match status" value="1"/>
</dbReference>
<dbReference type="InterPro" id="IPR051037">
    <property type="entry name" value="RNAPII_TF_IWS1"/>
</dbReference>
<dbReference type="InterPro" id="IPR035441">
    <property type="entry name" value="TFIIS/LEDGF_dom_sf"/>
</dbReference>
<dbReference type="InterPro" id="IPR017923">
    <property type="entry name" value="TFIIS_N"/>
</dbReference>
<dbReference type="PANTHER" id="PTHR46010">
    <property type="entry name" value="PROTEIN IWS1 HOMOLOG"/>
    <property type="match status" value="1"/>
</dbReference>
<dbReference type="PANTHER" id="PTHR46010:SF1">
    <property type="entry name" value="PROTEIN IWS1 HOMOLOG"/>
    <property type="match status" value="1"/>
</dbReference>
<dbReference type="Pfam" id="PF08711">
    <property type="entry name" value="Med26"/>
    <property type="match status" value="1"/>
</dbReference>
<dbReference type="SUPFAM" id="SSF47676">
    <property type="entry name" value="Conserved domain common to transcription factors TFIIS, elongin A, CRSP70"/>
    <property type="match status" value="1"/>
</dbReference>
<dbReference type="PROSITE" id="PS51319">
    <property type="entry name" value="TFIIS_N"/>
    <property type="match status" value="1"/>
</dbReference>
<gene>
    <name type="primary">Iws1</name>
    <name type="synonym">Iws1l</name>
</gene>
<comment type="function">
    <text evidence="1">Transcription factor which plays a key role in defining the composition of the RNA polymerase II (RNAPII) elongation complex and in modulating the production of mature mRNA transcripts. Acts as an assembly factor to recruit various factors to the RNAPII elongation complex and is recruited to the complex via binding to the transcription elongation factor SUPT6H bound to the C-terminal domain (CTD) of the RNAPII subunit RPB1 (POLR2A). The SUPT6H:IWS1:CTD complex recruits mRNA export factors (ALYREF/THOC4, EXOSC10) as well as histone modifying enzymes (such as SETD2) to ensure proper mRNA splicing, efficient mRNA export and elongation-coupled H3K36 methylation, a signature chromatin mark of active transcription (By similarity).</text>
</comment>
<comment type="subunit">
    <text evidence="3">Interacts with SUPT6H; binds preferentially to the POLR2A-bound SUPT6H. Interacts with ALYREF/THOC4, SETD2 and PRMT5 (By similarity). Interacts with HDGFRP2 (By similarity). Interacts (via IBM motif) with PSIP1 (via IBD domain); phosphorylation increases its affinity for PSIP1 (By similarity).</text>
</comment>
<comment type="subcellular location">
    <subcellularLocation>
        <location evidence="4">Nucleus</location>
    </subcellularLocation>
</comment>
<comment type="alternative products">
    <event type="alternative splicing"/>
    <isoform>
        <id>Q8C1D8-1</id>
        <name>1</name>
        <sequence type="displayed"/>
    </isoform>
    <isoform>
        <id>Q8C1D8-2</id>
        <name>2</name>
        <sequence type="described" ref="VSP_016994 VSP_016995"/>
    </isoform>
</comment>
<comment type="tissue specificity">
    <text evidence="6">Ubiquitous. Expressed at highest level in kidney, then testicle, large intestine, small intestine, spleen and prostate, whereas the lowest level is detected in heart.</text>
</comment>
<comment type="PTM">
    <text evidence="3">Phosphorylation increases its interaction with PSIP1.</text>
</comment>
<comment type="similarity">
    <text evidence="8">Belongs to the IWS1 family.</text>
</comment>
<comment type="sequence caution" evidence="8">
    <conflict type="erroneous initiation">
        <sequence resource="EMBL-CDS" id="BAB24793"/>
    </conflict>
    <text>Truncated N-terminus.</text>
</comment>
<comment type="sequence caution" evidence="8">
    <conflict type="erroneous initiation">
        <sequence resource="EMBL-CDS" id="BAE23006"/>
    </conflict>
    <text>Truncated N-terminus.</text>
</comment>
<sequence length="766" mass="85248">MDSEYYSGDQSDDGGATPVQDERDSGSDGEDGVTEQHSGSDTGSVDHHSENETSDREDGLAKIHNGTDSENDEPSNANASDSESEELHRPKDSDSDSEEHAESPASDSENEPVNQHGSDSENEELLNGHASDSEKEEVSKHAASDSEAEDTLQPQVSESDSEDPPRPQASDSENEEPPKPRISDSESEELPKPRVSDSESEDPPRPQASDSESEELPKPRVSDSESEDPPRPQASDSESEELPKPRVSDSESEDPQKGPASDSEAEDASRHKEKPDSDDSDGENKREDSEVQNESDGHTDRKGLHSSDSEEEEPKRQKIDSDDDEEKEGDEEKVAKRKAAVLSDSEDDAGNASAKKSRVVCDADDSDSDVVSDKSGKRETTVASDSEEEAGKEESSVKKKEDKDLFGSDSESGNEEENLIADIFGESGDEEEEEFTGFNQEDLEEEKNETQLKEAEDSDSDDNIKRGKHMDFLSDFEMMLQRKKSMCGKRRRNRDGGTFISDADDVVSAMIVKMNEAAEEDRQLNNQKKPALKKLTLLPTVVMHLKKQDLKETFIDSGVMSAIKEWLSPLPDRSLPALKIREELLKILQELPSVSQETLKHSGIGRAVMYLYKHPKESRSNKDMAGKLINEWSRPIFGLTSNYKGMTREEREQRDLEQMPQRRRLSSTGGQTPRRDLEKVLTGEEKALRPGDPGFCARARVPMPSNKDYVVRPKWNVEMESSRFQASSKKGISRLDKQMRKFTDIRKKSRSAHAVKISIEGNKMPL</sequence>